<evidence type="ECO:0000255" key="1">
    <source>
        <dbReference type="HAMAP-Rule" id="MF_01309"/>
    </source>
</evidence>
<evidence type="ECO:0000256" key="2">
    <source>
        <dbReference type="SAM" id="MobiDB-lite"/>
    </source>
</evidence>
<evidence type="ECO:0000305" key="3"/>
<protein>
    <recommendedName>
        <fullName evidence="1">Small ribosomal subunit protein uS3</fullName>
    </recommendedName>
    <alternativeName>
        <fullName evidence="3">30S ribosomal protein S3</fullName>
    </alternativeName>
</protein>
<reference key="1">
    <citation type="journal article" date="2006" name="Science">
        <title>Genomic islands and the ecology and evolution of Prochlorococcus.</title>
        <authorList>
            <person name="Coleman M.L."/>
            <person name="Sullivan M.B."/>
            <person name="Martiny A.C."/>
            <person name="Steglich C."/>
            <person name="Barry K."/>
            <person name="Delong E.F."/>
            <person name="Chisholm S.W."/>
        </authorList>
    </citation>
    <scope>NUCLEOTIDE SEQUENCE [LARGE SCALE GENOMIC DNA]</scope>
    <source>
        <strain>MIT 9312</strain>
    </source>
</reference>
<keyword id="KW-0687">Ribonucleoprotein</keyword>
<keyword id="KW-0689">Ribosomal protein</keyword>
<keyword id="KW-0694">RNA-binding</keyword>
<keyword id="KW-0699">rRNA-binding</keyword>
<organism>
    <name type="scientific">Prochlorococcus marinus (strain MIT 9312)</name>
    <dbReference type="NCBI Taxonomy" id="74546"/>
    <lineage>
        <taxon>Bacteria</taxon>
        <taxon>Bacillati</taxon>
        <taxon>Cyanobacteriota</taxon>
        <taxon>Cyanophyceae</taxon>
        <taxon>Synechococcales</taxon>
        <taxon>Prochlorococcaceae</taxon>
        <taxon>Prochlorococcus</taxon>
    </lineage>
</organism>
<gene>
    <name evidence="1" type="primary">rpsC</name>
    <name evidence="1" type="synonym">rps3</name>
    <name type="ordered locus">PMT9312_1644</name>
</gene>
<proteinExistence type="inferred from homology"/>
<comment type="function">
    <text evidence="1">Binds the lower part of the 30S subunit head. Binds mRNA in the 70S ribosome, positioning it for translation.</text>
</comment>
<comment type="subunit">
    <text evidence="1">Part of the 30S ribosomal subunit. Forms a tight complex with proteins S10 and S14.</text>
</comment>
<comment type="similarity">
    <text evidence="1">Belongs to the universal ribosomal protein uS3 family.</text>
</comment>
<feature type="chain" id="PRO_0000230713" description="Small ribosomal subunit protein uS3">
    <location>
        <begin position="1"/>
        <end position="243"/>
    </location>
</feature>
<feature type="domain" description="KH type-2" evidence="1">
    <location>
        <begin position="39"/>
        <end position="110"/>
    </location>
</feature>
<feature type="region of interest" description="Disordered" evidence="2">
    <location>
        <begin position="216"/>
        <end position="243"/>
    </location>
</feature>
<feature type="compositionally biased region" description="Basic and acidic residues" evidence="2">
    <location>
        <begin position="233"/>
        <end position="243"/>
    </location>
</feature>
<sequence>MGHKIHPSGLRLGITQEHRSKWFATSKTYPILLQEDFKIRTFIQKKYGAAGISDVLIARKADQLELELKTARPGVIVGRQGSGIEELRAGIQKTIGDNTRQVRINVVEVERVDADAFLLAEYISQQLEKRVAFRRTIRMALQRAQRAGVLGLKIQVGGRLNGAEIARTEWTREGRVPLHTLRAEIDYATREANTTYGVLGIKVWVFKGEVLPKEEKTIPVGASPKRKAGRRPQQFEDRSNENS</sequence>
<accession>Q318J0</accession>
<dbReference type="EMBL" id="CP000111">
    <property type="protein sequence ID" value="ABB50705.1"/>
    <property type="molecule type" value="Genomic_DNA"/>
</dbReference>
<dbReference type="RefSeq" id="WP_011377186.1">
    <property type="nucleotide sequence ID" value="NC_007577.1"/>
</dbReference>
<dbReference type="SMR" id="Q318J0"/>
<dbReference type="STRING" id="74546.PMT9312_1644"/>
<dbReference type="KEGG" id="pmi:PMT9312_1644"/>
<dbReference type="eggNOG" id="COG0092">
    <property type="taxonomic scope" value="Bacteria"/>
</dbReference>
<dbReference type="HOGENOM" id="CLU_058591_0_2_3"/>
<dbReference type="OrthoDB" id="9806396at2"/>
<dbReference type="Proteomes" id="UP000002715">
    <property type="component" value="Chromosome"/>
</dbReference>
<dbReference type="GO" id="GO:0022627">
    <property type="term" value="C:cytosolic small ribosomal subunit"/>
    <property type="evidence" value="ECO:0007669"/>
    <property type="project" value="TreeGrafter"/>
</dbReference>
<dbReference type="GO" id="GO:0003729">
    <property type="term" value="F:mRNA binding"/>
    <property type="evidence" value="ECO:0007669"/>
    <property type="project" value="UniProtKB-UniRule"/>
</dbReference>
<dbReference type="GO" id="GO:0019843">
    <property type="term" value="F:rRNA binding"/>
    <property type="evidence" value="ECO:0007669"/>
    <property type="project" value="UniProtKB-UniRule"/>
</dbReference>
<dbReference type="GO" id="GO:0003735">
    <property type="term" value="F:structural constituent of ribosome"/>
    <property type="evidence" value="ECO:0007669"/>
    <property type="project" value="InterPro"/>
</dbReference>
<dbReference type="GO" id="GO:0006412">
    <property type="term" value="P:translation"/>
    <property type="evidence" value="ECO:0007669"/>
    <property type="project" value="UniProtKB-UniRule"/>
</dbReference>
<dbReference type="CDD" id="cd02412">
    <property type="entry name" value="KH-II_30S_S3"/>
    <property type="match status" value="1"/>
</dbReference>
<dbReference type="FunFam" id="3.30.300.20:FF:000001">
    <property type="entry name" value="30S ribosomal protein S3"/>
    <property type="match status" value="1"/>
</dbReference>
<dbReference type="Gene3D" id="3.30.300.20">
    <property type="match status" value="1"/>
</dbReference>
<dbReference type="Gene3D" id="3.30.1140.32">
    <property type="entry name" value="Ribosomal protein S3, C-terminal domain"/>
    <property type="match status" value="1"/>
</dbReference>
<dbReference type="HAMAP" id="MF_01309_B">
    <property type="entry name" value="Ribosomal_uS3_B"/>
    <property type="match status" value="1"/>
</dbReference>
<dbReference type="InterPro" id="IPR004087">
    <property type="entry name" value="KH_dom"/>
</dbReference>
<dbReference type="InterPro" id="IPR015946">
    <property type="entry name" value="KH_dom-like_a/b"/>
</dbReference>
<dbReference type="InterPro" id="IPR004044">
    <property type="entry name" value="KH_dom_type_2"/>
</dbReference>
<dbReference type="InterPro" id="IPR009019">
    <property type="entry name" value="KH_sf_prok-type"/>
</dbReference>
<dbReference type="InterPro" id="IPR036419">
    <property type="entry name" value="Ribosomal_S3_C_sf"/>
</dbReference>
<dbReference type="InterPro" id="IPR005704">
    <property type="entry name" value="Ribosomal_uS3_bac-typ"/>
</dbReference>
<dbReference type="InterPro" id="IPR001351">
    <property type="entry name" value="Ribosomal_uS3_C"/>
</dbReference>
<dbReference type="InterPro" id="IPR018280">
    <property type="entry name" value="Ribosomal_uS3_CS"/>
</dbReference>
<dbReference type="NCBIfam" id="TIGR01009">
    <property type="entry name" value="rpsC_bact"/>
    <property type="match status" value="1"/>
</dbReference>
<dbReference type="PANTHER" id="PTHR11760">
    <property type="entry name" value="30S/40S RIBOSOMAL PROTEIN S3"/>
    <property type="match status" value="1"/>
</dbReference>
<dbReference type="PANTHER" id="PTHR11760:SF19">
    <property type="entry name" value="SMALL RIBOSOMAL SUBUNIT PROTEIN US3C"/>
    <property type="match status" value="1"/>
</dbReference>
<dbReference type="Pfam" id="PF07650">
    <property type="entry name" value="KH_2"/>
    <property type="match status" value="1"/>
</dbReference>
<dbReference type="Pfam" id="PF00189">
    <property type="entry name" value="Ribosomal_S3_C"/>
    <property type="match status" value="1"/>
</dbReference>
<dbReference type="SMART" id="SM00322">
    <property type="entry name" value="KH"/>
    <property type="match status" value="1"/>
</dbReference>
<dbReference type="SUPFAM" id="SSF54814">
    <property type="entry name" value="Prokaryotic type KH domain (KH-domain type II)"/>
    <property type="match status" value="1"/>
</dbReference>
<dbReference type="SUPFAM" id="SSF54821">
    <property type="entry name" value="Ribosomal protein S3 C-terminal domain"/>
    <property type="match status" value="1"/>
</dbReference>
<dbReference type="PROSITE" id="PS50823">
    <property type="entry name" value="KH_TYPE_2"/>
    <property type="match status" value="1"/>
</dbReference>
<dbReference type="PROSITE" id="PS00548">
    <property type="entry name" value="RIBOSOMAL_S3"/>
    <property type="match status" value="1"/>
</dbReference>
<name>RS3_PROM9</name>